<proteinExistence type="inferred from homology"/>
<protein>
    <recommendedName>
        <fullName evidence="1">Bis(5'-nucleosyl)-tetraphosphatase PrpE [asymmetrical]</fullName>
        <ecNumber evidence="1">3.6.1.17</ecNumber>
    </recommendedName>
    <alternativeName>
        <fullName evidence="1">Ap4A hydrolase</fullName>
    </alternativeName>
    <alternativeName>
        <fullName evidence="1">Diadenosine 5',5'''-P1,P4-tetraphosphate asymmetrical hydrolase</fullName>
        <shortName evidence="1">Diadenosine tetraphosphatase</shortName>
    </alternativeName>
</protein>
<keyword id="KW-0378">Hydrolase</keyword>
<keyword id="KW-0533">Nickel</keyword>
<comment type="function">
    <text evidence="1">Asymmetrically hydrolyzes Ap4p to yield AMP and ATP.</text>
</comment>
<comment type="catalytic activity">
    <reaction evidence="1">
        <text>P(1),P(4)-bis(5'-guanosyl) tetraphosphate + H2O = GMP + GTP + 2 H(+)</text>
        <dbReference type="Rhea" id="RHEA:22484"/>
        <dbReference type="ChEBI" id="CHEBI:15377"/>
        <dbReference type="ChEBI" id="CHEBI:15378"/>
        <dbReference type="ChEBI" id="CHEBI:37565"/>
        <dbReference type="ChEBI" id="CHEBI:57553"/>
        <dbReference type="ChEBI" id="CHEBI:58115"/>
        <dbReference type="EC" id="3.6.1.17"/>
    </reaction>
</comment>
<comment type="cofactor">
    <cofactor evidence="1">
        <name>Ni(2+)</name>
        <dbReference type="ChEBI" id="CHEBI:49786"/>
    </cofactor>
</comment>
<comment type="similarity">
    <text evidence="1">Belongs to the PrpE family.</text>
</comment>
<name>PRPE_ANOFW</name>
<accession>B7GLK2</accession>
<dbReference type="EC" id="3.6.1.17" evidence="1"/>
<dbReference type="EMBL" id="CP000922">
    <property type="protein sequence ID" value="ACJ34471.1"/>
    <property type="molecule type" value="Genomic_DNA"/>
</dbReference>
<dbReference type="RefSeq" id="WP_012575652.1">
    <property type="nucleotide sequence ID" value="NC_011567.1"/>
</dbReference>
<dbReference type="SMR" id="B7GLK2"/>
<dbReference type="STRING" id="491915.Aflv_2112"/>
<dbReference type="GeneID" id="7038365"/>
<dbReference type="KEGG" id="afl:Aflv_2112"/>
<dbReference type="PATRIC" id="fig|491915.6.peg.2169"/>
<dbReference type="eggNOG" id="COG0639">
    <property type="taxonomic scope" value="Bacteria"/>
</dbReference>
<dbReference type="HOGENOM" id="CLU_023125_3_0_9"/>
<dbReference type="Proteomes" id="UP000000742">
    <property type="component" value="Chromosome"/>
</dbReference>
<dbReference type="GO" id="GO:0005737">
    <property type="term" value="C:cytoplasm"/>
    <property type="evidence" value="ECO:0007669"/>
    <property type="project" value="TreeGrafter"/>
</dbReference>
<dbReference type="GO" id="GO:0004081">
    <property type="term" value="F:bis(5'-nucleosyl)-tetraphosphatase (asymmetrical) activity"/>
    <property type="evidence" value="ECO:0007669"/>
    <property type="project" value="UniProtKB-UniRule"/>
</dbReference>
<dbReference type="GO" id="GO:0016151">
    <property type="term" value="F:nickel cation binding"/>
    <property type="evidence" value="ECO:0007669"/>
    <property type="project" value="UniProtKB-UniRule"/>
</dbReference>
<dbReference type="GO" id="GO:0016791">
    <property type="term" value="F:phosphatase activity"/>
    <property type="evidence" value="ECO:0007669"/>
    <property type="project" value="TreeGrafter"/>
</dbReference>
<dbReference type="CDD" id="cd07423">
    <property type="entry name" value="MPP_Prp_like"/>
    <property type="match status" value="1"/>
</dbReference>
<dbReference type="Gene3D" id="3.60.21.10">
    <property type="match status" value="1"/>
</dbReference>
<dbReference type="HAMAP" id="MF_01443">
    <property type="entry name" value="PrpE"/>
    <property type="match status" value="1"/>
</dbReference>
<dbReference type="InterPro" id="IPR050126">
    <property type="entry name" value="Ap4A_hydrolase"/>
</dbReference>
<dbReference type="InterPro" id="IPR023937">
    <property type="entry name" value="Bis(5'-nucleosyl)-tetraP_PrpE"/>
</dbReference>
<dbReference type="InterPro" id="IPR004843">
    <property type="entry name" value="Calcineurin-like_PHP_ApaH"/>
</dbReference>
<dbReference type="InterPro" id="IPR029052">
    <property type="entry name" value="Metallo-depent_PP-like"/>
</dbReference>
<dbReference type="InterPro" id="IPR041780">
    <property type="entry name" value="MPP_PrpE-like"/>
</dbReference>
<dbReference type="InterPro" id="IPR006186">
    <property type="entry name" value="Ser/Thr-sp_prot-phosphatase"/>
</dbReference>
<dbReference type="NCBIfam" id="NF010148">
    <property type="entry name" value="PRK13625.1"/>
    <property type="match status" value="1"/>
</dbReference>
<dbReference type="PANTHER" id="PTHR42850:SF7">
    <property type="entry name" value="BIS(5'-NUCLEOSYL)-TETRAPHOSPHATASE PRPE [ASYMMETRICAL]"/>
    <property type="match status" value="1"/>
</dbReference>
<dbReference type="PANTHER" id="PTHR42850">
    <property type="entry name" value="METALLOPHOSPHOESTERASE"/>
    <property type="match status" value="1"/>
</dbReference>
<dbReference type="Pfam" id="PF00149">
    <property type="entry name" value="Metallophos"/>
    <property type="match status" value="1"/>
</dbReference>
<dbReference type="PRINTS" id="PR00114">
    <property type="entry name" value="STPHPHTASE"/>
</dbReference>
<dbReference type="SUPFAM" id="SSF56300">
    <property type="entry name" value="Metallo-dependent phosphatases"/>
    <property type="match status" value="1"/>
</dbReference>
<reference key="1">
    <citation type="journal article" date="2008" name="Genome Biol.">
        <title>Encapsulated in silica: genome, proteome and physiology of the thermophilic bacterium Anoxybacillus flavithermus WK1.</title>
        <authorList>
            <person name="Saw J.H."/>
            <person name="Mountain B.W."/>
            <person name="Feng L."/>
            <person name="Omelchenko M.V."/>
            <person name="Hou S."/>
            <person name="Saito J.A."/>
            <person name="Stott M.B."/>
            <person name="Li D."/>
            <person name="Zhao G."/>
            <person name="Wu J."/>
            <person name="Galperin M.Y."/>
            <person name="Koonin E.V."/>
            <person name="Makarova K.S."/>
            <person name="Wolf Y.I."/>
            <person name="Rigden D.J."/>
            <person name="Dunfield P.F."/>
            <person name="Wang L."/>
            <person name="Alam M."/>
        </authorList>
    </citation>
    <scope>NUCLEOTIDE SEQUENCE [LARGE SCALE GENOMIC DNA]</scope>
    <source>
        <strain>DSM 21510 / WK1</strain>
    </source>
</reference>
<gene>
    <name evidence="1" type="primary">prpE</name>
    <name type="ordered locus">Aflv_2112</name>
</gene>
<sequence length="245" mass="27854">MIYDIIGDIHGCFHEFMLLTKKLGYVWENDVPIHPNGRKLAFVGDLADRGPQSLQVIDTVISLVQQNKAVYVPGNHCDKLYRFFLGRNVQVTHGLETTVAEWEQADEKTKTRIRTQFMKLYENAPLYAILDDGKLVIAHAGIRGDYIGKSNQKVKKFVLYGDITGEKHPDGSPVRRDWAKHYRGDALIVYGHTPVKEPRWLNNTVNIDTGCVFGGQLTALRYPEMETVSVPSTMPYVAEKFRPFD</sequence>
<organism>
    <name type="scientific">Anoxybacillus flavithermus (strain DSM 21510 / WK1)</name>
    <dbReference type="NCBI Taxonomy" id="491915"/>
    <lineage>
        <taxon>Bacteria</taxon>
        <taxon>Bacillati</taxon>
        <taxon>Bacillota</taxon>
        <taxon>Bacilli</taxon>
        <taxon>Bacillales</taxon>
        <taxon>Anoxybacillaceae</taxon>
        <taxon>Anoxybacillus</taxon>
    </lineage>
</organism>
<feature type="chain" id="PRO_1000145926" description="Bis(5'-nucleosyl)-tetraphosphatase PrpE [asymmetrical]">
    <location>
        <begin position="1"/>
        <end position="245"/>
    </location>
</feature>
<evidence type="ECO:0000255" key="1">
    <source>
        <dbReference type="HAMAP-Rule" id="MF_01443"/>
    </source>
</evidence>